<keyword id="KW-0997">Cell inner membrane</keyword>
<keyword id="KW-1003">Cell membrane</keyword>
<keyword id="KW-0418">Kinase</keyword>
<keyword id="KW-0472">Membrane</keyword>
<keyword id="KW-0597">Phosphoprotein</keyword>
<keyword id="KW-0598">Phosphotransferase system</keyword>
<keyword id="KW-0762">Sugar transport</keyword>
<keyword id="KW-0808">Transferase</keyword>
<keyword id="KW-0812">Transmembrane</keyword>
<keyword id="KW-1133">Transmembrane helix</keyword>
<keyword id="KW-0813">Transport</keyword>
<reference key="1">
    <citation type="journal article" date="2002" name="Science">
        <title>50 million years of genomic stasis in endosymbiotic bacteria.</title>
        <authorList>
            <person name="Tamas I."/>
            <person name="Klasson L."/>
            <person name="Canbaeck B."/>
            <person name="Naeslund A.K."/>
            <person name="Eriksson A.-S."/>
            <person name="Wernegreen J.J."/>
            <person name="Sandstroem J.P."/>
            <person name="Moran N.A."/>
            <person name="Andersson S.G.E."/>
        </authorList>
    </citation>
    <scope>NUCLEOTIDE SEQUENCE [LARGE SCALE GENOMIC DNA]</scope>
    <source>
        <strain>Sg</strain>
    </source>
</reference>
<organism>
    <name type="scientific">Buchnera aphidicola subsp. Schizaphis graminum (strain Sg)</name>
    <dbReference type="NCBI Taxonomy" id="198804"/>
    <lineage>
        <taxon>Bacteria</taxon>
        <taxon>Pseudomonadati</taxon>
        <taxon>Pseudomonadota</taxon>
        <taxon>Gammaproteobacteria</taxon>
        <taxon>Enterobacterales</taxon>
        <taxon>Erwiniaceae</taxon>
        <taxon>Buchnera</taxon>
    </lineage>
</organism>
<sequence length="477" mass="51941">MFKNVFSSLQKVGKSLMLPVSVLPIAGILLGIGSAHFTLIPEIISQIMAQTGGSIFSNMPLIFAIGVALGFSNNDGVAALAAVVAYSILIQTLSAVELNILNTDANTIKNKNFSDIGILGGIIAGAISAYMFNKFYKIQLPEYLGFFAGKRFVPIISGLFAIFVGLILSLIWPSIGNKIQIFSEWAAYQNPIIAFSLYGLVERALVPFGLHHIWNVPFQMQIGEYKNSIGQIFHGDIARYMAGDTTAGNLSGGFIFKMYGLPGAALAIWHTAKKENRKKIGSIMISAALTAFLTGITEPIEFSFILVAPILYIIHAILAGLSFPLCIFLNMRAGTSFSHGFIDFIVLSGHSHKIFLFPIVGICYGLLYYSIFYFLITTFNLKTPGREENKNTVFFRNNIEIAPYIVEALGGKNNIKNLDACITRLRITVSEISKVNEENLKNLGAAGVVISGSGVQAVFGTRSENIKTAIDEYINNI</sequence>
<proteinExistence type="inferred from homology"/>
<accession>Q8K9J0</accession>
<feature type="chain" id="PRO_0000186526" description="PTS system glucose-specific EIICB component">
    <location>
        <begin position="1"/>
        <end position="477"/>
    </location>
</feature>
<feature type="transmembrane region" description="Helical" evidence="3">
    <location>
        <begin position="20"/>
        <end position="40"/>
    </location>
</feature>
<feature type="transmembrane region" description="Helical" evidence="3">
    <location>
        <begin position="51"/>
        <end position="71"/>
    </location>
</feature>
<feature type="transmembrane region" description="Helical" evidence="3">
    <location>
        <begin position="76"/>
        <end position="96"/>
    </location>
</feature>
<feature type="transmembrane region" description="Helical" evidence="3">
    <location>
        <begin position="112"/>
        <end position="132"/>
    </location>
</feature>
<feature type="transmembrane region" description="Helical" evidence="3">
    <location>
        <begin position="152"/>
        <end position="172"/>
    </location>
</feature>
<feature type="transmembrane region" description="Helical" evidence="3">
    <location>
        <begin position="250"/>
        <end position="270"/>
    </location>
</feature>
<feature type="transmembrane region" description="Helical" evidence="3">
    <location>
        <begin position="280"/>
        <end position="300"/>
    </location>
</feature>
<feature type="transmembrane region" description="Helical" evidence="3">
    <location>
        <begin position="304"/>
        <end position="324"/>
    </location>
</feature>
<feature type="transmembrane region" description="Helical" evidence="3">
    <location>
        <begin position="354"/>
        <end position="374"/>
    </location>
</feature>
<feature type="domain" description="PTS EIIC type-1" evidence="3">
    <location>
        <begin position="1"/>
        <end position="388"/>
    </location>
</feature>
<feature type="domain" description="PTS EIIB type-1" evidence="2">
    <location>
        <begin position="399"/>
        <end position="477"/>
    </location>
</feature>
<feature type="active site" description="Phosphocysteine intermediate; for EIIB activity" evidence="1 2">
    <location>
        <position position="421"/>
    </location>
</feature>
<feature type="modified residue" description="Phosphocysteine" evidence="1">
    <location>
        <position position="421"/>
    </location>
</feature>
<protein>
    <recommendedName>
        <fullName evidence="1">PTS system glucose-specific EIICB component</fullName>
    </recommendedName>
    <alternativeName>
        <fullName evidence="1">EIICB-Glc</fullName>
        <shortName evidence="1">EII-Glc</shortName>
    </alternativeName>
    <domain>
        <recommendedName>
            <fullName evidence="1">Glucose permease IIC component</fullName>
        </recommendedName>
        <alternativeName>
            <fullName evidence="1">PTS system glucose-specific EIIC component</fullName>
        </alternativeName>
    </domain>
    <domain>
        <recommendedName>
            <fullName evidence="1">Glucose-specific phosphotransferase enzyme IIB component</fullName>
            <ecNumber evidence="1">2.7.1.199</ecNumber>
        </recommendedName>
        <alternativeName>
            <fullName evidence="1">PTS system glucose-specific EIIB component</fullName>
        </alternativeName>
    </domain>
</protein>
<dbReference type="EC" id="2.7.1.199" evidence="1"/>
<dbReference type="EMBL" id="AE013218">
    <property type="protein sequence ID" value="AAM67898.1"/>
    <property type="molecule type" value="Genomic_DNA"/>
</dbReference>
<dbReference type="RefSeq" id="WP_011053865.1">
    <property type="nucleotide sequence ID" value="NC_004061.1"/>
</dbReference>
<dbReference type="SMR" id="Q8K9J0"/>
<dbReference type="STRING" id="198804.BUsg_344"/>
<dbReference type="GeneID" id="93003815"/>
<dbReference type="KEGG" id="bas:BUsg_344"/>
<dbReference type="eggNOG" id="COG1263">
    <property type="taxonomic scope" value="Bacteria"/>
</dbReference>
<dbReference type="eggNOG" id="COG1264">
    <property type="taxonomic scope" value="Bacteria"/>
</dbReference>
<dbReference type="HOGENOM" id="CLU_012312_1_0_6"/>
<dbReference type="Proteomes" id="UP000000416">
    <property type="component" value="Chromosome"/>
</dbReference>
<dbReference type="GO" id="GO:0005886">
    <property type="term" value="C:plasma membrane"/>
    <property type="evidence" value="ECO:0007669"/>
    <property type="project" value="UniProtKB-SubCell"/>
</dbReference>
<dbReference type="GO" id="GO:0055056">
    <property type="term" value="F:D-glucose transmembrane transporter activity"/>
    <property type="evidence" value="ECO:0007669"/>
    <property type="project" value="InterPro"/>
</dbReference>
<dbReference type="GO" id="GO:0016301">
    <property type="term" value="F:kinase activity"/>
    <property type="evidence" value="ECO:0007669"/>
    <property type="project" value="UniProtKB-KW"/>
</dbReference>
<dbReference type="GO" id="GO:0008982">
    <property type="term" value="F:protein-N(PI)-phosphohistidine-sugar phosphotransferase activity"/>
    <property type="evidence" value="ECO:0007669"/>
    <property type="project" value="InterPro"/>
</dbReference>
<dbReference type="GO" id="GO:0090564">
    <property type="term" value="F:protein-phosphocysteine-glucose phosphotransferase system transporter activity"/>
    <property type="evidence" value="ECO:0007669"/>
    <property type="project" value="TreeGrafter"/>
</dbReference>
<dbReference type="GO" id="GO:1904659">
    <property type="term" value="P:D-glucose transmembrane transport"/>
    <property type="evidence" value="ECO:0007669"/>
    <property type="project" value="InterPro"/>
</dbReference>
<dbReference type="GO" id="GO:0009401">
    <property type="term" value="P:phosphoenolpyruvate-dependent sugar phosphotransferase system"/>
    <property type="evidence" value="ECO:0007669"/>
    <property type="project" value="UniProtKB-KW"/>
</dbReference>
<dbReference type="CDD" id="cd00212">
    <property type="entry name" value="PTS_IIB_glc"/>
    <property type="match status" value="1"/>
</dbReference>
<dbReference type="FunFam" id="3.30.1360.60:FF:000001">
    <property type="entry name" value="PTS system glucose-specific IIBC component PtsG"/>
    <property type="match status" value="1"/>
</dbReference>
<dbReference type="Gene3D" id="3.30.1360.60">
    <property type="entry name" value="Glucose permease domain IIB"/>
    <property type="match status" value="1"/>
</dbReference>
<dbReference type="InterPro" id="IPR036878">
    <property type="entry name" value="Glu_permease_IIB"/>
</dbReference>
<dbReference type="InterPro" id="IPR018113">
    <property type="entry name" value="PTrfase_EIIB_Cys"/>
</dbReference>
<dbReference type="InterPro" id="IPR003352">
    <property type="entry name" value="PTS_EIIC"/>
</dbReference>
<dbReference type="InterPro" id="IPR013013">
    <property type="entry name" value="PTS_EIIC_1"/>
</dbReference>
<dbReference type="InterPro" id="IPR050429">
    <property type="entry name" value="PTS_Glucose_EIICBA"/>
</dbReference>
<dbReference type="InterPro" id="IPR001996">
    <property type="entry name" value="PTS_IIB_1"/>
</dbReference>
<dbReference type="InterPro" id="IPR011299">
    <property type="entry name" value="PTS_IIBC_glc"/>
</dbReference>
<dbReference type="NCBIfam" id="TIGR00826">
    <property type="entry name" value="EIIB_glc"/>
    <property type="match status" value="1"/>
</dbReference>
<dbReference type="NCBIfam" id="NF008301">
    <property type="entry name" value="PRK11089.1"/>
    <property type="match status" value="1"/>
</dbReference>
<dbReference type="NCBIfam" id="TIGR02002">
    <property type="entry name" value="PTS-II-BC-glcB"/>
    <property type="match status" value="1"/>
</dbReference>
<dbReference type="PANTHER" id="PTHR30009">
    <property type="entry name" value="CYTOCHROME C-TYPE SYNTHESIS PROTEIN AND PTS TRANSMEMBRANE COMPONENT"/>
    <property type="match status" value="1"/>
</dbReference>
<dbReference type="PANTHER" id="PTHR30009:SF20">
    <property type="entry name" value="PTS SYSTEM GLUCOSE-SPECIFIC EIICB COMPONENT-RELATED"/>
    <property type="match status" value="1"/>
</dbReference>
<dbReference type="Pfam" id="PF00367">
    <property type="entry name" value="PTS_EIIB"/>
    <property type="match status" value="1"/>
</dbReference>
<dbReference type="Pfam" id="PF02378">
    <property type="entry name" value="PTS_EIIC"/>
    <property type="match status" value="1"/>
</dbReference>
<dbReference type="SUPFAM" id="SSF55604">
    <property type="entry name" value="Glucose permease domain IIB"/>
    <property type="match status" value="1"/>
</dbReference>
<dbReference type="PROSITE" id="PS51098">
    <property type="entry name" value="PTS_EIIB_TYPE_1"/>
    <property type="match status" value="1"/>
</dbReference>
<dbReference type="PROSITE" id="PS01035">
    <property type="entry name" value="PTS_EIIB_TYPE_1_CYS"/>
    <property type="match status" value="1"/>
</dbReference>
<dbReference type="PROSITE" id="PS51103">
    <property type="entry name" value="PTS_EIIC_TYPE_1"/>
    <property type="match status" value="1"/>
</dbReference>
<comment type="function">
    <text evidence="1">The phosphoenolpyruvate-dependent sugar phosphotransferase system (sugar PTS), a major carbohydrate active transport system, catalyzes the phosphorylation of incoming sugar substrates concomitantly with their translocation across the cell membrane. The enzyme II complex composed of PtsG and Crr is involved in glucose transport.</text>
</comment>
<comment type="catalytic activity">
    <reaction evidence="1">
        <text>N(pros)-phospho-L-histidyl-[protein] + D-glucose(out) = D-glucose 6-phosphate(in) + L-histidyl-[protein]</text>
        <dbReference type="Rhea" id="RHEA:33367"/>
        <dbReference type="Rhea" id="RHEA-COMP:9745"/>
        <dbReference type="Rhea" id="RHEA-COMP:9746"/>
        <dbReference type="ChEBI" id="CHEBI:4167"/>
        <dbReference type="ChEBI" id="CHEBI:29979"/>
        <dbReference type="ChEBI" id="CHEBI:61548"/>
        <dbReference type="ChEBI" id="CHEBI:64837"/>
        <dbReference type="EC" id="2.7.1.199"/>
    </reaction>
</comment>
<comment type="subcellular location">
    <subcellularLocation>
        <location evidence="3">Cell inner membrane</location>
        <topology evidence="3">Multi-pass membrane protein</topology>
    </subcellularLocation>
</comment>
<comment type="domain">
    <text evidence="2">The EIIB domain is phosphorylated by phospho-EIIA on a cysteinyl or histidyl residue, depending on the transported sugar. Then, it transfers the phosphoryl group to the sugar substrate concomitantly with the sugar uptake processed by the EIIC domain.</text>
</comment>
<comment type="domain">
    <text evidence="3">The EIIC domain forms the PTS system translocation channel and contains the specific substrate-binding site.</text>
</comment>
<gene>
    <name type="primary">ptsG</name>
    <name type="ordered locus">BUsg_344</name>
</gene>
<evidence type="ECO:0000250" key="1">
    <source>
        <dbReference type="UniProtKB" id="P69786"/>
    </source>
</evidence>
<evidence type="ECO:0000255" key="2">
    <source>
        <dbReference type="PROSITE-ProRule" id="PRU00421"/>
    </source>
</evidence>
<evidence type="ECO:0000255" key="3">
    <source>
        <dbReference type="PROSITE-ProRule" id="PRU00426"/>
    </source>
</evidence>
<name>PTGCB_BUCAP</name>